<keyword id="KW-1015">Disulfide bond</keyword>
<keyword id="KW-0325">Glycoprotein</keyword>
<keyword id="KW-0326">Glycosidase</keyword>
<keyword id="KW-0378">Hydrolase</keyword>
<keyword id="KW-0732">Signal</keyword>
<feature type="signal peptide" evidence="3">
    <location>
        <begin position="1"/>
        <end position="20"/>
    </location>
</feature>
<feature type="chain" id="PRO_0000395554" description="Fructan 1-exohydrolase" evidence="3">
    <location>
        <begin position="21"/>
        <end position="595"/>
    </location>
</feature>
<feature type="active site" evidence="1">
    <location>
        <position position="74"/>
    </location>
</feature>
<feature type="glycosylation site" description="N-linked (GlcNAc...) asparagine" evidence="3">
    <location>
        <position position="167"/>
    </location>
</feature>
<feature type="glycosylation site" description="N-linked (GlcNAc...) asparagine" evidence="3">
    <location>
        <position position="235"/>
    </location>
</feature>
<feature type="glycosylation site" description="N-linked (GlcNAc...) asparagine" evidence="3">
    <location>
        <position position="247"/>
    </location>
</feature>
<feature type="glycosylation site" description="N-linked (GlcNAc...) asparagine" evidence="3">
    <location>
        <position position="566"/>
    </location>
</feature>
<feature type="disulfide bond" evidence="1">
    <location>
        <begin position="445"/>
        <end position="491"/>
    </location>
</feature>
<sequence length="595" mass="66492">MAQAWAFLLPLLVLGSYVTSLFFPTYISNPLCGGDGGRSFHLCAQAPKDPDPPAVSTMYKTAFHFQPAKNWMNDPSGPMYFNGIYHEFYQYNLNGPIFGDIVWGHSVSTDLVNWIGLEPALVRDTPSDIDGCWTGSVTILPGGKPIIIYTGGDIDQNQAQNIAFPKNRSDPYLREWIKADNNPVLRPDEPGMNSIEFRDPTTGWIGPDGLWRMAVGGELNGYSAALLYKSEDFLNWTKVDHPLYSHNGSNMWECPDFFAVLPGNNAGLDLSAAIPQGAKHALKMSVDSVDKYMIGVYDLQRDAFVPDNVVDDRRLWLRIDYGTFYASKSFFDSNKNRRIIWGWSRETDSPSDDLAKGWAGLHTIPRTIWLAGDGKQLLQWPVEEIESLRTNEINHQGLELNKGDLFEIKEVDAFQADVEIDFELASIDDADRFDPSWLLDPEKHCGEAGASVPGGIGPFGLVILASDNMDEHTEVYFRVYKSEEKYMVLMCSDLRRSSLRPDLEKPAYGGFFEFDLEKERKISLRTLIDRSAVESFGGGGRVCITSRVYPAVLADVGRAHIYAFNNGSATVSVPQLSAWTMRKAQVNVEKGWSAI</sequence>
<organism>
    <name type="scientific">Aegilops speltoides</name>
    <name type="common">Goatgrass</name>
    <name type="synonym">Triticum speltoides</name>
    <dbReference type="NCBI Taxonomy" id="4573"/>
    <lineage>
        <taxon>Eukaryota</taxon>
        <taxon>Viridiplantae</taxon>
        <taxon>Streptophyta</taxon>
        <taxon>Embryophyta</taxon>
        <taxon>Tracheophyta</taxon>
        <taxon>Spermatophyta</taxon>
        <taxon>Magnoliopsida</taxon>
        <taxon>Liliopsida</taxon>
        <taxon>Poales</taxon>
        <taxon>Poaceae</taxon>
        <taxon>BOP clade</taxon>
        <taxon>Pooideae</taxon>
        <taxon>Triticodae</taxon>
        <taxon>Triticeae</taxon>
        <taxon>Triticinae</taxon>
        <taxon>Aegilops</taxon>
    </lineage>
</organism>
<reference evidence="4" key="1">
    <citation type="journal article" date="2008" name="Mol. Breed.">
        <title>The genome structure of the 1-FEH genes in wheat (Triticum aestivum L.): new markers to track stem carbohydrates and grain filling QTLs in breeding.</title>
        <authorList>
            <person name="Zhang J."/>
            <person name="Huang S."/>
            <person name="Fosu-Nyarko J."/>
            <person name="Dell B."/>
            <person name="McNeil M."/>
            <person name="Waters I."/>
            <person name="Moolhuijzen P."/>
            <person name="Conocono E."/>
            <person name="Appels R."/>
        </authorList>
        <dbReference type="AGRICOLA" id="IND44093987"/>
    </citation>
    <scope>NUCLEOTIDE SEQUENCE [GENOMIC DNA]</scope>
</reference>
<comment type="function">
    <text evidence="2">Hydrolyzes inulin-type beta-(2,1)-fructans. May play a role as a beta-(2,1)-trimmer during graminan biosynthesis (By similarity).</text>
</comment>
<comment type="catalytic activity">
    <reaction evidence="2">
        <text>Hydrolysis of terminal, non-reducing (2-&gt;1)-linked beta-D-fructofuranose residues in fructans.</text>
        <dbReference type="EC" id="3.2.1.153"/>
    </reaction>
</comment>
<comment type="activity regulation">
    <text evidence="2">Inhibited by sucrose.</text>
</comment>
<comment type="similarity">
    <text evidence="3">Belongs to the glycosyl hydrolase 32 family.</text>
</comment>
<accession>B6DZD1</accession>
<evidence type="ECO:0000250" key="1">
    <source>
        <dbReference type="UniProtKB" id="Q43866"/>
    </source>
</evidence>
<evidence type="ECO:0000250" key="2">
    <source>
        <dbReference type="UniProtKB" id="Q84PN8"/>
    </source>
</evidence>
<evidence type="ECO:0000255" key="3"/>
<evidence type="ECO:0000312" key="4">
    <source>
        <dbReference type="EMBL" id="ACI16119.1"/>
    </source>
</evidence>
<name>1FEH_AEGSP</name>
<gene>
    <name evidence="2" type="primary">1-FEH</name>
</gene>
<protein>
    <recommendedName>
        <fullName evidence="4">Fructan 1-exohydrolase</fullName>
        <ecNumber>3.2.1.153</ecNumber>
    </recommendedName>
</protein>
<proteinExistence type="inferred from homology"/>
<dbReference type="EC" id="3.2.1.153"/>
<dbReference type="EMBL" id="FJ184993">
    <property type="protein sequence ID" value="ACI16119.1"/>
    <property type="molecule type" value="Genomic_DNA"/>
</dbReference>
<dbReference type="SMR" id="B6DZD1"/>
<dbReference type="GlyCosmos" id="B6DZD1">
    <property type="glycosylation" value="4 sites, No reported glycans"/>
</dbReference>
<dbReference type="GO" id="GO:0033948">
    <property type="term" value="F:fructan beta-(2,1)-fructosidase activity"/>
    <property type="evidence" value="ECO:0007669"/>
    <property type="project" value="UniProtKB-EC"/>
</dbReference>
<dbReference type="GO" id="GO:0005975">
    <property type="term" value="P:carbohydrate metabolic process"/>
    <property type="evidence" value="ECO:0007669"/>
    <property type="project" value="InterPro"/>
</dbReference>
<dbReference type="CDD" id="cd18624">
    <property type="entry name" value="GH32_Fruct1-like"/>
    <property type="match status" value="1"/>
</dbReference>
<dbReference type="FunFam" id="2.115.10.20:FF:000001">
    <property type="entry name" value="Beta-fructofuranosidase, insoluble isoenzyme CWINV1"/>
    <property type="match status" value="1"/>
</dbReference>
<dbReference type="FunFam" id="2.60.120.560:FF:000002">
    <property type="entry name" value="Beta-fructofuranosidase, insoluble isoenzyme CWINV1"/>
    <property type="match status" value="1"/>
</dbReference>
<dbReference type="Gene3D" id="2.60.120.560">
    <property type="entry name" value="Exo-inulinase, domain 1"/>
    <property type="match status" value="1"/>
</dbReference>
<dbReference type="Gene3D" id="2.115.10.20">
    <property type="entry name" value="Glycosyl hydrolase domain, family 43"/>
    <property type="match status" value="1"/>
</dbReference>
<dbReference type="InterPro" id="IPR013320">
    <property type="entry name" value="ConA-like_dom_sf"/>
</dbReference>
<dbReference type="InterPro" id="IPR050551">
    <property type="entry name" value="Fructan_Metab_Enzymes"/>
</dbReference>
<dbReference type="InterPro" id="IPR001362">
    <property type="entry name" value="Glyco_hydro_32"/>
</dbReference>
<dbReference type="InterPro" id="IPR013189">
    <property type="entry name" value="Glyco_hydro_32_C"/>
</dbReference>
<dbReference type="InterPro" id="IPR013148">
    <property type="entry name" value="Glyco_hydro_32_N"/>
</dbReference>
<dbReference type="InterPro" id="IPR023296">
    <property type="entry name" value="Glyco_hydro_beta-prop_sf"/>
</dbReference>
<dbReference type="PANTHER" id="PTHR31953">
    <property type="entry name" value="BETA-FRUCTOFURANOSIDASE, INSOLUBLE ISOENZYME CWINV1-RELATED"/>
    <property type="match status" value="1"/>
</dbReference>
<dbReference type="Pfam" id="PF08244">
    <property type="entry name" value="Glyco_hydro_32C"/>
    <property type="match status" value="1"/>
</dbReference>
<dbReference type="Pfam" id="PF00251">
    <property type="entry name" value="Glyco_hydro_32N"/>
    <property type="match status" value="1"/>
</dbReference>
<dbReference type="SMART" id="SM00640">
    <property type="entry name" value="Glyco_32"/>
    <property type="match status" value="1"/>
</dbReference>
<dbReference type="SUPFAM" id="SSF75005">
    <property type="entry name" value="Arabinanase/levansucrase/invertase"/>
    <property type="match status" value="1"/>
</dbReference>
<dbReference type="SUPFAM" id="SSF49899">
    <property type="entry name" value="Concanavalin A-like lectins/glucanases"/>
    <property type="match status" value="1"/>
</dbReference>